<keyword id="KW-0560">Oxidoreductase</keyword>
<keyword id="KW-1185">Reference proteome</keyword>
<sequence>MEAGMKLGLQLGYWGAQPPQNHAELVAAAEDAGFDTVFTAEAWGSDAYTPLAWWGSSTQRVRLGTSVIQLSARTPTACAMAALTLDHLSGGRHILGLGVSGPQVVEGWYGQRFPKPLARTREYIDIVRQVWARESPVTSAGPHYRLPLTGEGTTGLGKALKPITHPLRADIPIMLGAEGPKNVALAAEICDGWLPIFYSPRMAGMYNEWLDEGFARPGARRSREDFEICATAQVVITDDRAAAFAGIKPFLALYMGGMGAEETNFHADVYRRMGYTQVVDEVTKLFRSGRKDEAAEIIPDELVDDAVIVGDIDHVRKQMAVWEAAGVTMMVVTAGSAEQVRDLAALV</sequence>
<reference key="1">
    <citation type="journal article" date="1998" name="Nature">
        <title>Deciphering the biology of Mycobacterium tuberculosis from the complete genome sequence.</title>
        <authorList>
            <person name="Cole S.T."/>
            <person name="Brosch R."/>
            <person name="Parkhill J."/>
            <person name="Garnier T."/>
            <person name="Churcher C.M."/>
            <person name="Harris D.E."/>
            <person name="Gordon S.V."/>
            <person name="Eiglmeier K."/>
            <person name="Gas S."/>
            <person name="Barry C.E. III"/>
            <person name="Tekaia F."/>
            <person name="Badcock K."/>
            <person name="Basham D."/>
            <person name="Brown D."/>
            <person name="Chillingworth T."/>
            <person name="Connor R."/>
            <person name="Davies R.M."/>
            <person name="Devlin K."/>
            <person name="Feltwell T."/>
            <person name="Gentles S."/>
            <person name="Hamlin N."/>
            <person name="Holroyd S."/>
            <person name="Hornsby T."/>
            <person name="Jagels K."/>
            <person name="Krogh A."/>
            <person name="McLean J."/>
            <person name="Moule S."/>
            <person name="Murphy L.D."/>
            <person name="Oliver S."/>
            <person name="Osborne J."/>
            <person name="Quail M.A."/>
            <person name="Rajandream M.A."/>
            <person name="Rogers J."/>
            <person name="Rutter S."/>
            <person name="Seeger K."/>
            <person name="Skelton S."/>
            <person name="Squares S."/>
            <person name="Squares R."/>
            <person name="Sulston J.E."/>
            <person name="Taylor K."/>
            <person name="Whitehead S."/>
            <person name="Barrell B.G."/>
        </authorList>
    </citation>
    <scope>NUCLEOTIDE SEQUENCE [LARGE SCALE GENOMIC DNA]</scope>
    <source>
        <strain>ATCC 25618 / H37Rv</strain>
    </source>
</reference>
<reference key="2">
    <citation type="journal article" date="2011" name="Mol. Cell. Proteomics">
        <title>Proteogenomic analysis of Mycobacterium tuberculosis by high resolution mass spectrometry.</title>
        <authorList>
            <person name="Kelkar D.S."/>
            <person name="Kumar D."/>
            <person name="Kumar P."/>
            <person name="Balakrishnan L."/>
            <person name="Muthusamy B."/>
            <person name="Yadav A.K."/>
            <person name="Shrivastava P."/>
            <person name="Marimuthu A."/>
            <person name="Anand S."/>
            <person name="Sundaram H."/>
            <person name="Kingsbury R."/>
            <person name="Harsha H.C."/>
            <person name="Nair B."/>
            <person name="Prasad T.S."/>
            <person name="Chauhan D.S."/>
            <person name="Katoch K."/>
            <person name="Katoch V.M."/>
            <person name="Kumar P."/>
            <person name="Chaerkady R."/>
            <person name="Ramachandran S."/>
            <person name="Dash D."/>
            <person name="Pandey A."/>
        </authorList>
    </citation>
    <scope>IDENTIFICATION BY MASS SPECTROMETRY [LARGE SCALE ANALYSIS]</scope>
    <source>
        <strain>ATCC 25618 / H37Rv</strain>
    </source>
</reference>
<dbReference type="EC" id="1.-.-.-"/>
<dbReference type="EMBL" id="AL123456">
    <property type="protein sequence ID" value="CCP46342.1"/>
    <property type="molecule type" value="Genomic_DNA"/>
</dbReference>
<dbReference type="PIR" id="B70808">
    <property type="entry name" value="B70808"/>
</dbReference>
<dbReference type="RefSeq" id="NP_218037.1">
    <property type="nucleotide sequence ID" value="NC_000962.3"/>
</dbReference>
<dbReference type="RefSeq" id="WP_003900084.1">
    <property type="nucleotide sequence ID" value="NC_000962.3"/>
</dbReference>
<dbReference type="SMR" id="O53565"/>
<dbReference type="STRING" id="83332.Rv3520c"/>
<dbReference type="PaxDb" id="83332-Rv3520c"/>
<dbReference type="GeneID" id="887310"/>
<dbReference type="KEGG" id="mtu:Rv3520c"/>
<dbReference type="KEGG" id="mtv:RVBD_3520c"/>
<dbReference type="PATRIC" id="fig|83332.111.peg.3921"/>
<dbReference type="TubercuList" id="Rv3520c"/>
<dbReference type="eggNOG" id="COG2141">
    <property type="taxonomic scope" value="Bacteria"/>
</dbReference>
<dbReference type="InParanoid" id="O53565"/>
<dbReference type="OrthoDB" id="5241778at2"/>
<dbReference type="PhylomeDB" id="O53565"/>
<dbReference type="Proteomes" id="UP000001584">
    <property type="component" value="Chromosome"/>
</dbReference>
<dbReference type="GO" id="GO:0009274">
    <property type="term" value="C:peptidoglycan-based cell wall"/>
    <property type="evidence" value="ECO:0007005"/>
    <property type="project" value="MTBBASE"/>
</dbReference>
<dbReference type="GO" id="GO:0005886">
    <property type="term" value="C:plasma membrane"/>
    <property type="evidence" value="ECO:0007005"/>
    <property type="project" value="MTBBASE"/>
</dbReference>
<dbReference type="GO" id="GO:0016705">
    <property type="term" value="F:oxidoreductase activity, acting on paired donors, with incorporation or reduction of molecular oxygen"/>
    <property type="evidence" value="ECO:0007669"/>
    <property type="project" value="InterPro"/>
</dbReference>
<dbReference type="CDD" id="cd01097">
    <property type="entry name" value="Tetrahydromethanopterin_reductase"/>
    <property type="match status" value="1"/>
</dbReference>
<dbReference type="FunFam" id="3.20.20.30:FF:000010">
    <property type="entry name" value="LLM class F420-dependent oxidoreductase"/>
    <property type="match status" value="1"/>
</dbReference>
<dbReference type="Gene3D" id="3.20.20.30">
    <property type="entry name" value="Luciferase-like domain"/>
    <property type="match status" value="1"/>
</dbReference>
<dbReference type="InterPro" id="IPR050564">
    <property type="entry name" value="F420-G6PD/mer"/>
</dbReference>
<dbReference type="InterPro" id="IPR019951">
    <property type="entry name" value="F420_OxRdatse_Rv3520c_pred"/>
</dbReference>
<dbReference type="InterPro" id="IPR011251">
    <property type="entry name" value="Luciferase-like_dom"/>
</dbReference>
<dbReference type="InterPro" id="IPR036661">
    <property type="entry name" value="Luciferase-like_sf"/>
</dbReference>
<dbReference type="NCBIfam" id="TIGR03559">
    <property type="entry name" value="F420_Rv3520c"/>
    <property type="match status" value="1"/>
</dbReference>
<dbReference type="PANTHER" id="PTHR43244">
    <property type="match status" value="1"/>
</dbReference>
<dbReference type="PANTHER" id="PTHR43244:SF1">
    <property type="entry name" value="5,10-METHYLENETETRAHYDROMETHANOPTERIN REDUCTASE"/>
    <property type="match status" value="1"/>
</dbReference>
<dbReference type="Pfam" id="PF00296">
    <property type="entry name" value="Bac_luciferase"/>
    <property type="match status" value="1"/>
</dbReference>
<dbReference type="SUPFAM" id="SSF51679">
    <property type="entry name" value="Bacterial luciferase-like"/>
    <property type="match status" value="1"/>
</dbReference>
<organism>
    <name type="scientific">Mycobacterium tuberculosis (strain ATCC 25618 / H37Rv)</name>
    <dbReference type="NCBI Taxonomy" id="83332"/>
    <lineage>
        <taxon>Bacteria</taxon>
        <taxon>Bacillati</taxon>
        <taxon>Actinomycetota</taxon>
        <taxon>Actinomycetes</taxon>
        <taxon>Mycobacteriales</taxon>
        <taxon>Mycobacteriaceae</taxon>
        <taxon>Mycobacterium</taxon>
        <taxon>Mycobacterium tuberculosis complex</taxon>
    </lineage>
</organism>
<feature type="chain" id="PRO_0000415512" description="Putative coenzyme F420-dependent oxidoreductase Rv3520c">
    <location>
        <begin position="1"/>
        <end position="347"/>
    </location>
</feature>
<accession>O53565</accession>
<accession>L0TED4</accession>
<protein>
    <recommendedName>
        <fullName>Putative coenzyme F420-dependent oxidoreductase Rv3520c</fullName>
        <ecNumber>1.-.-.-</ecNumber>
    </recommendedName>
</protein>
<gene>
    <name type="ordered locus">Rv3520c</name>
</gene>
<proteinExistence type="evidence at protein level"/>
<name>Y3520_MYCTU</name>